<name>RS7_BRAOL</name>
<organism>
    <name type="scientific">Brassica oleracea</name>
    <name type="common">Wild cabbage</name>
    <dbReference type="NCBI Taxonomy" id="3712"/>
    <lineage>
        <taxon>Eukaryota</taxon>
        <taxon>Viridiplantae</taxon>
        <taxon>Streptophyta</taxon>
        <taxon>Embryophyta</taxon>
        <taxon>Tracheophyta</taxon>
        <taxon>Spermatophyta</taxon>
        <taxon>Magnoliopsida</taxon>
        <taxon>eudicotyledons</taxon>
        <taxon>Gunneridae</taxon>
        <taxon>Pentapetalae</taxon>
        <taxon>rosids</taxon>
        <taxon>malvids</taxon>
        <taxon>Brassicales</taxon>
        <taxon>Brassicaceae</taxon>
        <taxon>Brassiceae</taxon>
        <taxon>Brassica</taxon>
    </lineage>
</organism>
<feature type="chain" id="PRO_0000174206" description="Small ribosomal subunit protein eS7">
    <location>
        <begin position="1"/>
        <end position="191"/>
    </location>
</feature>
<feature type="modified residue" description="N-acetylmethionine" evidence="1">
    <location>
        <position position="1"/>
    </location>
</feature>
<gene>
    <name type="primary">RPS7</name>
</gene>
<proteinExistence type="evidence at transcript level"/>
<evidence type="ECO:0000250" key="1">
    <source>
        <dbReference type="UniProtKB" id="Q8LD03"/>
    </source>
</evidence>
<evidence type="ECO:0000305" key="2"/>
<reference key="1">
    <citation type="online journal article" date="1999" name="Plant Gene Register">
        <title>Nucleotide sequence of a cDNA from microspore derived embryos of Brassica oleracea is homologous to 40S ribosomal protein S7.</title>
        <authorList>
            <person name="Gossen K.K."/>
            <person name="Katavic V."/>
            <person name="Taylor D.C."/>
        </authorList>
        <locator>PGR99-096</locator>
    </citation>
    <scope>NUCLEOTIDE SEQUENCE [MRNA]</scope>
</reference>
<sequence>MFSAQNKIHKDKGVAPTEFEERVAQAFFDLENTNQELKSDLKDLYINQAVSMDIAGNRKAVVIYVPFRLRKAFRKIHSRLVRELEKKFSGNDVIFVATRRIMRPPKKGSAVQRPRNRTLTSVHEAMLEDVAYPAEIVGKRTRYRVDGTKIMKVYLEPKERNNTEYKLETMVGVYRKLTGKDVVFEYPVADP</sequence>
<accession>Q9XH45</accession>
<comment type="similarity">
    <text evidence="2">Belongs to the eukaryotic ribosomal protein eS7 family.</text>
</comment>
<keyword id="KW-0007">Acetylation</keyword>
<keyword id="KW-0687">Ribonucleoprotein</keyword>
<keyword id="KW-0689">Ribosomal protein</keyword>
<protein>
    <recommendedName>
        <fullName evidence="2">Small ribosomal subunit protein eS7</fullName>
    </recommendedName>
    <alternativeName>
        <fullName>40S ribosomal protein S7</fullName>
    </alternativeName>
</protein>
<dbReference type="EMBL" id="AF144752">
    <property type="protein sequence ID" value="AAD44761.1"/>
    <property type="molecule type" value="mRNA"/>
</dbReference>
<dbReference type="SMR" id="Q9XH45"/>
<dbReference type="GO" id="GO:0030686">
    <property type="term" value="C:90S preribosome"/>
    <property type="evidence" value="ECO:0007669"/>
    <property type="project" value="TreeGrafter"/>
</dbReference>
<dbReference type="GO" id="GO:0022627">
    <property type="term" value="C:cytosolic small ribosomal subunit"/>
    <property type="evidence" value="ECO:0007669"/>
    <property type="project" value="TreeGrafter"/>
</dbReference>
<dbReference type="GO" id="GO:0032040">
    <property type="term" value="C:small-subunit processome"/>
    <property type="evidence" value="ECO:0007669"/>
    <property type="project" value="TreeGrafter"/>
</dbReference>
<dbReference type="GO" id="GO:0003729">
    <property type="term" value="F:mRNA binding"/>
    <property type="evidence" value="ECO:0007669"/>
    <property type="project" value="EnsemblPlants"/>
</dbReference>
<dbReference type="GO" id="GO:0003735">
    <property type="term" value="F:structural constituent of ribosome"/>
    <property type="evidence" value="ECO:0007669"/>
    <property type="project" value="EnsemblPlants"/>
</dbReference>
<dbReference type="GO" id="GO:0042274">
    <property type="term" value="P:ribosomal small subunit biogenesis"/>
    <property type="evidence" value="ECO:0007669"/>
    <property type="project" value="TreeGrafter"/>
</dbReference>
<dbReference type="GO" id="GO:0006364">
    <property type="term" value="P:rRNA processing"/>
    <property type="evidence" value="ECO:0007669"/>
    <property type="project" value="TreeGrafter"/>
</dbReference>
<dbReference type="GO" id="GO:0006412">
    <property type="term" value="P:translation"/>
    <property type="evidence" value="ECO:0007669"/>
    <property type="project" value="InterPro"/>
</dbReference>
<dbReference type="InterPro" id="IPR000554">
    <property type="entry name" value="Ribosomal_eS7"/>
</dbReference>
<dbReference type="InterPro" id="IPR047861">
    <property type="entry name" value="Ribosomal_eS7_CS"/>
</dbReference>
<dbReference type="PANTHER" id="PTHR11278">
    <property type="entry name" value="40S RIBOSOMAL PROTEIN S7"/>
    <property type="match status" value="1"/>
</dbReference>
<dbReference type="PANTHER" id="PTHR11278:SF0">
    <property type="entry name" value="SMALL RIBOSOMAL SUBUNIT PROTEIN ES7"/>
    <property type="match status" value="1"/>
</dbReference>
<dbReference type="Pfam" id="PF01251">
    <property type="entry name" value="Ribosomal_S7e"/>
    <property type="match status" value="1"/>
</dbReference>
<dbReference type="PROSITE" id="PS00948">
    <property type="entry name" value="RIBOSOMAL_S7E"/>
    <property type="match status" value="1"/>
</dbReference>